<gene>
    <name evidence="1" type="primary">hemL</name>
    <name type="ordered locus">DP0812</name>
</gene>
<reference key="1">
    <citation type="journal article" date="2004" name="Environ. Microbiol.">
        <title>The genome of Desulfotalea psychrophila, a sulfate-reducing bacterium from permanently cold Arctic sediments.</title>
        <authorList>
            <person name="Rabus R."/>
            <person name="Ruepp A."/>
            <person name="Frickey T."/>
            <person name="Rattei T."/>
            <person name="Fartmann B."/>
            <person name="Stark M."/>
            <person name="Bauer M."/>
            <person name="Zibat A."/>
            <person name="Lombardot T."/>
            <person name="Becker I."/>
            <person name="Amann J."/>
            <person name="Gellner K."/>
            <person name="Teeling H."/>
            <person name="Leuschner W.D."/>
            <person name="Gloeckner F.-O."/>
            <person name="Lupas A.N."/>
            <person name="Amann R."/>
            <person name="Klenk H.-P."/>
        </authorList>
    </citation>
    <scope>NUCLEOTIDE SEQUENCE [LARGE SCALE GENOMIC DNA]</scope>
    <source>
        <strain>DSM 12343 / LSv54</strain>
    </source>
</reference>
<keyword id="KW-0963">Cytoplasm</keyword>
<keyword id="KW-0413">Isomerase</keyword>
<keyword id="KW-0627">Porphyrin biosynthesis</keyword>
<keyword id="KW-0663">Pyridoxal phosphate</keyword>
<keyword id="KW-1185">Reference proteome</keyword>
<evidence type="ECO:0000255" key="1">
    <source>
        <dbReference type="HAMAP-Rule" id="MF_00375"/>
    </source>
</evidence>
<dbReference type="EC" id="5.4.3.8" evidence="1"/>
<dbReference type="EMBL" id="CR522870">
    <property type="protein sequence ID" value="CAG35541.1"/>
    <property type="molecule type" value="Genomic_DNA"/>
</dbReference>
<dbReference type="RefSeq" id="WP_011188057.1">
    <property type="nucleotide sequence ID" value="NC_006138.1"/>
</dbReference>
<dbReference type="SMR" id="Q6AQ32"/>
<dbReference type="STRING" id="177439.DP0812"/>
<dbReference type="KEGG" id="dps:DP0812"/>
<dbReference type="eggNOG" id="COG0001">
    <property type="taxonomic scope" value="Bacteria"/>
</dbReference>
<dbReference type="HOGENOM" id="CLU_016922_1_5_7"/>
<dbReference type="OrthoDB" id="9801834at2"/>
<dbReference type="UniPathway" id="UPA00251">
    <property type="reaction ID" value="UER00317"/>
</dbReference>
<dbReference type="Proteomes" id="UP000000602">
    <property type="component" value="Chromosome"/>
</dbReference>
<dbReference type="GO" id="GO:0005737">
    <property type="term" value="C:cytoplasm"/>
    <property type="evidence" value="ECO:0007669"/>
    <property type="project" value="UniProtKB-SubCell"/>
</dbReference>
<dbReference type="GO" id="GO:0042286">
    <property type="term" value="F:glutamate-1-semialdehyde 2,1-aminomutase activity"/>
    <property type="evidence" value="ECO:0007669"/>
    <property type="project" value="UniProtKB-UniRule"/>
</dbReference>
<dbReference type="GO" id="GO:0030170">
    <property type="term" value="F:pyridoxal phosphate binding"/>
    <property type="evidence" value="ECO:0007669"/>
    <property type="project" value="InterPro"/>
</dbReference>
<dbReference type="GO" id="GO:0008483">
    <property type="term" value="F:transaminase activity"/>
    <property type="evidence" value="ECO:0007669"/>
    <property type="project" value="InterPro"/>
</dbReference>
<dbReference type="GO" id="GO:0006782">
    <property type="term" value="P:protoporphyrinogen IX biosynthetic process"/>
    <property type="evidence" value="ECO:0007669"/>
    <property type="project" value="UniProtKB-UniRule"/>
</dbReference>
<dbReference type="CDD" id="cd00610">
    <property type="entry name" value="OAT_like"/>
    <property type="match status" value="1"/>
</dbReference>
<dbReference type="FunFam" id="3.40.640.10:FF:000021">
    <property type="entry name" value="Glutamate-1-semialdehyde 2,1-aminomutase"/>
    <property type="match status" value="1"/>
</dbReference>
<dbReference type="Gene3D" id="3.90.1150.10">
    <property type="entry name" value="Aspartate Aminotransferase, domain 1"/>
    <property type="match status" value="1"/>
</dbReference>
<dbReference type="Gene3D" id="3.40.640.10">
    <property type="entry name" value="Type I PLP-dependent aspartate aminotransferase-like (Major domain)"/>
    <property type="match status" value="1"/>
</dbReference>
<dbReference type="HAMAP" id="MF_00375">
    <property type="entry name" value="HemL_aminotrans_3"/>
    <property type="match status" value="1"/>
</dbReference>
<dbReference type="InterPro" id="IPR004639">
    <property type="entry name" value="4pyrrol_synth_GluAld_NH2Trfase"/>
</dbReference>
<dbReference type="InterPro" id="IPR005814">
    <property type="entry name" value="Aminotrans_3"/>
</dbReference>
<dbReference type="InterPro" id="IPR049704">
    <property type="entry name" value="Aminotrans_3_PPA_site"/>
</dbReference>
<dbReference type="InterPro" id="IPR015424">
    <property type="entry name" value="PyrdxlP-dep_Trfase"/>
</dbReference>
<dbReference type="InterPro" id="IPR015421">
    <property type="entry name" value="PyrdxlP-dep_Trfase_major"/>
</dbReference>
<dbReference type="InterPro" id="IPR015422">
    <property type="entry name" value="PyrdxlP-dep_Trfase_small"/>
</dbReference>
<dbReference type="NCBIfam" id="TIGR00713">
    <property type="entry name" value="hemL"/>
    <property type="match status" value="1"/>
</dbReference>
<dbReference type="NCBIfam" id="NF000818">
    <property type="entry name" value="PRK00062.1"/>
    <property type="match status" value="1"/>
</dbReference>
<dbReference type="PANTHER" id="PTHR43713">
    <property type="entry name" value="GLUTAMATE-1-SEMIALDEHYDE 2,1-AMINOMUTASE"/>
    <property type="match status" value="1"/>
</dbReference>
<dbReference type="PANTHER" id="PTHR43713:SF3">
    <property type="entry name" value="GLUTAMATE-1-SEMIALDEHYDE 2,1-AMINOMUTASE 1, CHLOROPLASTIC-RELATED"/>
    <property type="match status" value="1"/>
</dbReference>
<dbReference type="Pfam" id="PF00202">
    <property type="entry name" value="Aminotran_3"/>
    <property type="match status" value="1"/>
</dbReference>
<dbReference type="SUPFAM" id="SSF53383">
    <property type="entry name" value="PLP-dependent transferases"/>
    <property type="match status" value="1"/>
</dbReference>
<dbReference type="PROSITE" id="PS00600">
    <property type="entry name" value="AA_TRANSFER_CLASS_3"/>
    <property type="match status" value="1"/>
</dbReference>
<name>GSA_DESPS</name>
<proteinExistence type="inferred from homology"/>
<accession>Q6AQ32</accession>
<organism>
    <name type="scientific">Desulfotalea psychrophila (strain LSv54 / DSM 12343)</name>
    <dbReference type="NCBI Taxonomy" id="177439"/>
    <lineage>
        <taxon>Bacteria</taxon>
        <taxon>Pseudomonadati</taxon>
        <taxon>Thermodesulfobacteriota</taxon>
        <taxon>Desulfobulbia</taxon>
        <taxon>Desulfobulbales</taxon>
        <taxon>Desulfocapsaceae</taxon>
        <taxon>Desulfotalea</taxon>
    </lineage>
</organism>
<feature type="chain" id="PRO_0000243568" description="Glutamate-1-semialdehyde 2,1-aminomutase">
    <location>
        <begin position="1"/>
        <end position="430"/>
    </location>
</feature>
<feature type="modified residue" description="N6-(pyridoxal phosphate)lysine" evidence="1">
    <location>
        <position position="267"/>
    </location>
</feature>
<protein>
    <recommendedName>
        <fullName evidence="1">Glutamate-1-semialdehyde 2,1-aminomutase</fullName>
        <shortName evidence="1">GSA</shortName>
        <ecNumber evidence="1">5.4.3.8</ecNumber>
    </recommendedName>
    <alternativeName>
        <fullName evidence="1">Glutamate-1-semialdehyde aminotransferase</fullName>
        <shortName evidence="1">GSA-AT</shortName>
    </alternativeName>
</protein>
<comment type="catalytic activity">
    <reaction evidence="1">
        <text>(S)-4-amino-5-oxopentanoate = 5-aminolevulinate</text>
        <dbReference type="Rhea" id="RHEA:14265"/>
        <dbReference type="ChEBI" id="CHEBI:57501"/>
        <dbReference type="ChEBI" id="CHEBI:356416"/>
        <dbReference type="EC" id="5.4.3.8"/>
    </reaction>
</comment>
<comment type="cofactor">
    <cofactor evidence="1">
        <name>pyridoxal 5'-phosphate</name>
        <dbReference type="ChEBI" id="CHEBI:597326"/>
    </cofactor>
</comment>
<comment type="pathway">
    <text evidence="1">Porphyrin-containing compound metabolism; protoporphyrin-IX biosynthesis; 5-aminolevulinate from L-glutamyl-tRNA(Glu): step 2/2.</text>
</comment>
<comment type="subunit">
    <text evidence="1">Homodimer.</text>
</comment>
<comment type="subcellular location">
    <subcellularLocation>
        <location evidence="1">Cytoplasm</location>
    </subcellularLocation>
</comment>
<comment type="similarity">
    <text evidence="1">Belongs to the class-III pyridoxal-phosphate-dependent aminotransferase family. HemL subfamily.</text>
</comment>
<sequence length="430" mass="45562">MESLKSKKLFAEAKKVIPGGVNSPVRACLSVGCDPLFIERAEGSYIYDADGQKYLDFVNSWGPMIMGHAHPDIIKAIQDAAVYGTSYGAPTSSEVDLASMVVEAVPSIEKVRFVSSGTEATMSAVRLARGYTGKNVIVKFDGCYHGHADSFLVKAGSGVLTLGIPGSPGVPEDIVKNTISIPYNSVEALETTLRDADLNIACVIVEPVAGNMGCVPPAPGFLQKLREITAEEGIVLIFDEVITGFRLSYGGAQQYYGVTPDLTCLGKIIGGGLPVGAYGGKADIMNSVAPDGPVYQAGTLSGNPLAMAAGKAALKLLQQDGFYEDLNQKSAAYADGLLEVAGRVGLPMQLNRVGSVMTSFFTATPVTDFETAMKADTGLYGRHYRQMLDSGIYLAPSQFECSFMSSTHSDADLKRALLETEKSFSLLKNA</sequence>